<feature type="chain" id="PRO_1000045648" description="Probable glycine dehydrogenase (decarboxylating) subunit 1">
    <location>
        <begin position="1"/>
        <end position="453"/>
    </location>
</feature>
<protein>
    <recommendedName>
        <fullName evidence="1">Probable glycine dehydrogenase (decarboxylating) subunit 1</fullName>
        <ecNumber evidence="1">1.4.4.2</ecNumber>
    </recommendedName>
    <alternativeName>
        <fullName evidence="1">Glycine cleavage system P-protein subunit 1</fullName>
    </alternativeName>
    <alternativeName>
        <fullName evidence="1">Glycine decarboxylase subunit 1</fullName>
    </alternativeName>
    <alternativeName>
        <fullName evidence="1">Glycine dehydrogenase (aminomethyl-transferring) subunit 1</fullName>
    </alternativeName>
</protein>
<accession>Q2N886</accession>
<name>GCSPA_ERYLH</name>
<proteinExistence type="inferred from homology"/>
<organism>
    <name type="scientific">Erythrobacter litoralis (strain HTCC2594)</name>
    <dbReference type="NCBI Taxonomy" id="314225"/>
    <lineage>
        <taxon>Bacteria</taxon>
        <taxon>Pseudomonadati</taxon>
        <taxon>Pseudomonadota</taxon>
        <taxon>Alphaproteobacteria</taxon>
        <taxon>Sphingomonadales</taxon>
        <taxon>Erythrobacteraceae</taxon>
        <taxon>Erythrobacter/Porphyrobacter group</taxon>
        <taxon>Erythrobacter</taxon>
    </lineage>
</organism>
<gene>
    <name evidence="1" type="primary">gcvPA</name>
    <name type="ordered locus">ELI_10065</name>
</gene>
<sequence>MRYLPLTDTDRSEMLSVVGASSIDDLFVDVPKEARLDGPIRDLPMHASEMAVEKHMRARAAKNLVAGDVPFFLGAGAYRHHVPASVDHIIQRGEFLTAYTPYQPEIAQGTLQMLFEFQTQVAKLYGCEVANASMYDGSTACWEAISMASRVTKRNRAVLSGALHPHYSEVAKTMAKYLGLEIADAQPAIQAAPDNAGLTSRIDENTSCVVVQYPDILGRIADLTEIAEAAHAKGALLIVVNTEPVALGAIKSPGEMGADIVVGEGQSLGVGLQFGGPYLGLFAVRDKKHVRQMPGRLCGETVDAEGKRGFVLTLSTREQHIRREKATSNICTNSGLCALAFSVHMTLLGEVGLRRLAAENHRLACLTADRLAKVPGVTVLNDTFFNEFTIQVGQDAREIVRTLADKGVLAGVSLGRLYPDVERLSDALIVATTETTSEDDIEALGSALEEVLA</sequence>
<dbReference type="EC" id="1.4.4.2" evidence="1"/>
<dbReference type="EMBL" id="CP000157">
    <property type="protein sequence ID" value="ABC64105.1"/>
    <property type="molecule type" value="Genomic_DNA"/>
</dbReference>
<dbReference type="RefSeq" id="WP_011414932.1">
    <property type="nucleotide sequence ID" value="NC_007722.1"/>
</dbReference>
<dbReference type="SMR" id="Q2N886"/>
<dbReference type="STRING" id="314225.ELI_10065"/>
<dbReference type="KEGG" id="eli:ELI_10065"/>
<dbReference type="eggNOG" id="COG0403">
    <property type="taxonomic scope" value="Bacteria"/>
</dbReference>
<dbReference type="HOGENOM" id="CLU_004620_0_2_5"/>
<dbReference type="OrthoDB" id="9801272at2"/>
<dbReference type="Proteomes" id="UP000008808">
    <property type="component" value="Chromosome"/>
</dbReference>
<dbReference type="GO" id="GO:0004375">
    <property type="term" value="F:glycine dehydrogenase (decarboxylating) activity"/>
    <property type="evidence" value="ECO:0007669"/>
    <property type="project" value="UniProtKB-EC"/>
</dbReference>
<dbReference type="GO" id="GO:0019464">
    <property type="term" value="P:glycine decarboxylation via glycine cleavage system"/>
    <property type="evidence" value="ECO:0007669"/>
    <property type="project" value="UniProtKB-UniRule"/>
</dbReference>
<dbReference type="GO" id="GO:0009116">
    <property type="term" value="P:nucleoside metabolic process"/>
    <property type="evidence" value="ECO:0007669"/>
    <property type="project" value="InterPro"/>
</dbReference>
<dbReference type="CDD" id="cd00613">
    <property type="entry name" value="GDC-P"/>
    <property type="match status" value="1"/>
</dbReference>
<dbReference type="Gene3D" id="3.90.1150.10">
    <property type="entry name" value="Aspartate Aminotransferase, domain 1"/>
    <property type="match status" value="1"/>
</dbReference>
<dbReference type="Gene3D" id="3.40.640.10">
    <property type="entry name" value="Type I PLP-dependent aspartate aminotransferase-like (Major domain)"/>
    <property type="match status" value="1"/>
</dbReference>
<dbReference type="HAMAP" id="MF_00712">
    <property type="entry name" value="GcvPA"/>
    <property type="match status" value="1"/>
</dbReference>
<dbReference type="InterPro" id="IPR023010">
    <property type="entry name" value="GcvPA"/>
</dbReference>
<dbReference type="InterPro" id="IPR049315">
    <property type="entry name" value="GDC-P_N"/>
</dbReference>
<dbReference type="InterPro" id="IPR020581">
    <property type="entry name" value="GDC_P"/>
</dbReference>
<dbReference type="InterPro" id="IPR015424">
    <property type="entry name" value="PyrdxlP-dep_Trfase"/>
</dbReference>
<dbReference type="InterPro" id="IPR015421">
    <property type="entry name" value="PyrdxlP-dep_Trfase_major"/>
</dbReference>
<dbReference type="InterPro" id="IPR015422">
    <property type="entry name" value="PyrdxlP-dep_Trfase_small"/>
</dbReference>
<dbReference type="NCBIfam" id="NF001696">
    <property type="entry name" value="PRK00451.1"/>
    <property type="match status" value="1"/>
</dbReference>
<dbReference type="PANTHER" id="PTHR42806">
    <property type="entry name" value="GLYCINE CLEAVAGE SYSTEM P-PROTEIN"/>
    <property type="match status" value="1"/>
</dbReference>
<dbReference type="PANTHER" id="PTHR42806:SF1">
    <property type="entry name" value="GLYCINE DEHYDROGENASE (DECARBOXYLATING)"/>
    <property type="match status" value="1"/>
</dbReference>
<dbReference type="Pfam" id="PF02347">
    <property type="entry name" value="GDC-P"/>
    <property type="match status" value="1"/>
</dbReference>
<dbReference type="PIRSF" id="PIRSF006815">
    <property type="entry name" value="GcvPA"/>
    <property type="match status" value="1"/>
</dbReference>
<dbReference type="SUPFAM" id="SSF53383">
    <property type="entry name" value="PLP-dependent transferases"/>
    <property type="match status" value="1"/>
</dbReference>
<keyword id="KW-0560">Oxidoreductase</keyword>
<keyword id="KW-1185">Reference proteome</keyword>
<comment type="function">
    <text evidence="1">The glycine cleavage system catalyzes the degradation of glycine. The P protein binds the alpha-amino group of glycine through its pyridoxal phosphate cofactor; CO(2) is released and the remaining methylamine moiety is then transferred to the lipoamide cofactor of the H protein.</text>
</comment>
<comment type="catalytic activity">
    <reaction evidence="1">
        <text>N(6)-[(R)-lipoyl]-L-lysyl-[glycine-cleavage complex H protein] + glycine + H(+) = N(6)-[(R)-S(8)-aminomethyldihydrolipoyl]-L-lysyl-[glycine-cleavage complex H protein] + CO2</text>
        <dbReference type="Rhea" id="RHEA:24304"/>
        <dbReference type="Rhea" id="RHEA-COMP:10494"/>
        <dbReference type="Rhea" id="RHEA-COMP:10495"/>
        <dbReference type="ChEBI" id="CHEBI:15378"/>
        <dbReference type="ChEBI" id="CHEBI:16526"/>
        <dbReference type="ChEBI" id="CHEBI:57305"/>
        <dbReference type="ChEBI" id="CHEBI:83099"/>
        <dbReference type="ChEBI" id="CHEBI:83143"/>
        <dbReference type="EC" id="1.4.4.2"/>
    </reaction>
</comment>
<comment type="subunit">
    <text evidence="1">The glycine cleavage system is composed of four proteins: P, T, L and H. In this organism, the P 'protein' is a heterodimer of two subunits.</text>
</comment>
<comment type="similarity">
    <text evidence="1">Belongs to the GcvP family. N-terminal subunit subfamily.</text>
</comment>
<reference key="1">
    <citation type="journal article" date="2009" name="J. Bacteriol.">
        <title>Complete genome sequence of Erythrobacter litoralis HTCC2594.</title>
        <authorList>
            <person name="Oh H.M."/>
            <person name="Giovannoni S.J."/>
            <person name="Ferriera S."/>
            <person name="Johnson J."/>
            <person name="Cho J.C."/>
        </authorList>
    </citation>
    <scope>NUCLEOTIDE SEQUENCE [LARGE SCALE GENOMIC DNA]</scope>
    <source>
        <strain>HTCC2594</strain>
    </source>
</reference>
<evidence type="ECO:0000255" key="1">
    <source>
        <dbReference type="HAMAP-Rule" id="MF_00712"/>
    </source>
</evidence>